<comment type="function">
    <text evidence="1">Nucleotidase with a broad substrate specificity as it can dephosphorylate various ribo- and deoxyribonucleoside 5'-monophosphates and ribonucleoside 3'-monophosphates with highest affinity to 3'-AMP. Also hydrolyzes polyphosphate (exopolyphosphatase activity) with the preference for short-chain-length substrates (P20-25). Might be involved in the regulation of dNTP and NTP pools, and in the turnover of 3'-mononucleotides produced by numerous intracellular RNases (T1, T2, and F) during the degradation of various RNAs.</text>
</comment>
<comment type="catalytic activity">
    <reaction evidence="1">
        <text>a ribonucleoside 5'-phosphate + H2O = a ribonucleoside + phosphate</text>
        <dbReference type="Rhea" id="RHEA:12484"/>
        <dbReference type="ChEBI" id="CHEBI:15377"/>
        <dbReference type="ChEBI" id="CHEBI:18254"/>
        <dbReference type="ChEBI" id="CHEBI:43474"/>
        <dbReference type="ChEBI" id="CHEBI:58043"/>
        <dbReference type="EC" id="3.1.3.5"/>
    </reaction>
</comment>
<comment type="catalytic activity">
    <reaction evidence="1">
        <text>a ribonucleoside 3'-phosphate + H2O = a ribonucleoside + phosphate</text>
        <dbReference type="Rhea" id="RHEA:10144"/>
        <dbReference type="ChEBI" id="CHEBI:13197"/>
        <dbReference type="ChEBI" id="CHEBI:15377"/>
        <dbReference type="ChEBI" id="CHEBI:18254"/>
        <dbReference type="ChEBI" id="CHEBI:43474"/>
        <dbReference type="EC" id="3.1.3.6"/>
    </reaction>
</comment>
<comment type="catalytic activity">
    <reaction evidence="1">
        <text>[phosphate](n) + H2O = [phosphate](n-1) + phosphate + H(+)</text>
        <dbReference type="Rhea" id="RHEA:21528"/>
        <dbReference type="Rhea" id="RHEA-COMP:9859"/>
        <dbReference type="Rhea" id="RHEA-COMP:14279"/>
        <dbReference type="ChEBI" id="CHEBI:15377"/>
        <dbReference type="ChEBI" id="CHEBI:15378"/>
        <dbReference type="ChEBI" id="CHEBI:16838"/>
        <dbReference type="ChEBI" id="CHEBI:43474"/>
        <dbReference type="EC" id="3.6.1.11"/>
    </reaction>
</comment>
<comment type="cofactor">
    <cofactor evidence="1">
        <name>a divalent metal cation</name>
        <dbReference type="ChEBI" id="CHEBI:60240"/>
    </cofactor>
    <text evidence="1">Binds 1 divalent metal cation per subunit.</text>
</comment>
<comment type="subcellular location">
    <subcellularLocation>
        <location evidence="1">Cytoplasm</location>
    </subcellularLocation>
</comment>
<comment type="similarity">
    <text evidence="1">Belongs to the SurE nucleotidase family.</text>
</comment>
<dbReference type="EC" id="3.1.3.5" evidence="1"/>
<dbReference type="EC" id="3.1.3.6" evidence="1"/>
<dbReference type="EC" id="3.6.1.11" evidence="1"/>
<dbReference type="EMBL" id="CU928164">
    <property type="protein sequence ID" value="CAR19052.1"/>
    <property type="molecule type" value="Genomic_DNA"/>
</dbReference>
<dbReference type="RefSeq" id="WP_012602468.1">
    <property type="nucleotide sequence ID" value="NC_011750.1"/>
</dbReference>
<dbReference type="RefSeq" id="YP_002408864.1">
    <property type="nucleotide sequence ID" value="NC_011750.1"/>
</dbReference>
<dbReference type="SMR" id="B7NT88"/>
<dbReference type="STRING" id="585057.ECIAI39_2933"/>
<dbReference type="KEGG" id="ect:ECIAI39_2933"/>
<dbReference type="PATRIC" id="fig|585057.6.peg.3042"/>
<dbReference type="HOGENOM" id="CLU_045192_1_2_6"/>
<dbReference type="Proteomes" id="UP000000749">
    <property type="component" value="Chromosome"/>
</dbReference>
<dbReference type="GO" id="GO:0005737">
    <property type="term" value="C:cytoplasm"/>
    <property type="evidence" value="ECO:0007669"/>
    <property type="project" value="UniProtKB-SubCell"/>
</dbReference>
<dbReference type="GO" id="GO:0008254">
    <property type="term" value="F:3'-nucleotidase activity"/>
    <property type="evidence" value="ECO:0007669"/>
    <property type="project" value="UniProtKB-UniRule"/>
</dbReference>
<dbReference type="GO" id="GO:0008253">
    <property type="term" value="F:5'-nucleotidase activity"/>
    <property type="evidence" value="ECO:0007669"/>
    <property type="project" value="UniProtKB-UniRule"/>
</dbReference>
<dbReference type="GO" id="GO:0004309">
    <property type="term" value="F:exopolyphosphatase activity"/>
    <property type="evidence" value="ECO:0007669"/>
    <property type="project" value="UniProtKB-UniRule"/>
</dbReference>
<dbReference type="GO" id="GO:0046872">
    <property type="term" value="F:metal ion binding"/>
    <property type="evidence" value="ECO:0007669"/>
    <property type="project" value="UniProtKB-UniRule"/>
</dbReference>
<dbReference type="GO" id="GO:0000166">
    <property type="term" value="F:nucleotide binding"/>
    <property type="evidence" value="ECO:0007669"/>
    <property type="project" value="UniProtKB-KW"/>
</dbReference>
<dbReference type="FunFam" id="3.40.1210.10:FF:000001">
    <property type="entry name" value="5'/3'-nucleotidase SurE"/>
    <property type="match status" value="1"/>
</dbReference>
<dbReference type="Gene3D" id="3.40.1210.10">
    <property type="entry name" value="Survival protein SurE-like phosphatase/nucleotidase"/>
    <property type="match status" value="1"/>
</dbReference>
<dbReference type="HAMAP" id="MF_00060">
    <property type="entry name" value="SurE"/>
    <property type="match status" value="1"/>
</dbReference>
<dbReference type="InterPro" id="IPR030048">
    <property type="entry name" value="SurE"/>
</dbReference>
<dbReference type="InterPro" id="IPR002828">
    <property type="entry name" value="SurE-like_Pase/nucleotidase"/>
</dbReference>
<dbReference type="InterPro" id="IPR036523">
    <property type="entry name" value="SurE-like_sf"/>
</dbReference>
<dbReference type="NCBIfam" id="NF001488">
    <property type="entry name" value="PRK00346.1-1"/>
    <property type="match status" value="1"/>
</dbReference>
<dbReference type="NCBIfam" id="NF001489">
    <property type="entry name" value="PRK00346.1-3"/>
    <property type="match status" value="1"/>
</dbReference>
<dbReference type="NCBIfam" id="NF001490">
    <property type="entry name" value="PRK00346.1-4"/>
    <property type="match status" value="1"/>
</dbReference>
<dbReference type="NCBIfam" id="TIGR00087">
    <property type="entry name" value="surE"/>
    <property type="match status" value="1"/>
</dbReference>
<dbReference type="PANTHER" id="PTHR30457">
    <property type="entry name" value="5'-NUCLEOTIDASE SURE"/>
    <property type="match status" value="1"/>
</dbReference>
<dbReference type="PANTHER" id="PTHR30457:SF12">
    <property type="entry name" value="5'_3'-NUCLEOTIDASE SURE"/>
    <property type="match status" value="1"/>
</dbReference>
<dbReference type="Pfam" id="PF01975">
    <property type="entry name" value="SurE"/>
    <property type="match status" value="1"/>
</dbReference>
<dbReference type="SUPFAM" id="SSF64167">
    <property type="entry name" value="SurE-like"/>
    <property type="match status" value="1"/>
</dbReference>
<organism>
    <name type="scientific">Escherichia coli O7:K1 (strain IAI39 / ExPEC)</name>
    <dbReference type="NCBI Taxonomy" id="585057"/>
    <lineage>
        <taxon>Bacteria</taxon>
        <taxon>Pseudomonadati</taxon>
        <taxon>Pseudomonadota</taxon>
        <taxon>Gammaproteobacteria</taxon>
        <taxon>Enterobacterales</taxon>
        <taxon>Enterobacteriaceae</taxon>
        <taxon>Escherichia</taxon>
    </lineage>
</organism>
<protein>
    <recommendedName>
        <fullName evidence="1">5'/3'-nucleotidase SurE</fullName>
        <ecNumber evidence="1">3.1.3.5</ecNumber>
        <ecNumber evidence="1">3.1.3.6</ecNumber>
    </recommendedName>
    <alternativeName>
        <fullName evidence="1">Exopolyphosphatase</fullName>
        <ecNumber evidence="1">3.6.1.11</ecNumber>
    </alternativeName>
    <alternativeName>
        <fullName evidence="1">Nucleoside monophosphate phosphohydrolase</fullName>
    </alternativeName>
</protein>
<gene>
    <name evidence="1" type="primary">surE</name>
    <name type="ordered locus">ECIAI39_2933</name>
</gene>
<name>SURE_ECO7I</name>
<evidence type="ECO:0000255" key="1">
    <source>
        <dbReference type="HAMAP-Rule" id="MF_00060"/>
    </source>
</evidence>
<accession>B7NT88</accession>
<feature type="chain" id="PRO_1000196601" description="5'/3'-nucleotidase SurE">
    <location>
        <begin position="1"/>
        <end position="253"/>
    </location>
</feature>
<feature type="binding site" evidence="1">
    <location>
        <position position="8"/>
    </location>
    <ligand>
        <name>a divalent metal cation</name>
        <dbReference type="ChEBI" id="CHEBI:60240"/>
    </ligand>
</feature>
<feature type="binding site" evidence="1">
    <location>
        <position position="9"/>
    </location>
    <ligand>
        <name>a divalent metal cation</name>
        <dbReference type="ChEBI" id="CHEBI:60240"/>
    </ligand>
</feature>
<feature type="binding site" evidence="1">
    <location>
        <position position="39"/>
    </location>
    <ligand>
        <name>a divalent metal cation</name>
        <dbReference type="ChEBI" id="CHEBI:60240"/>
    </ligand>
</feature>
<feature type="binding site" evidence="1">
    <location>
        <position position="92"/>
    </location>
    <ligand>
        <name>a divalent metal cation</name>
        <dbReference type="ChEBI" id="CHEBI:60240"/>
    </ligand>
</feature>
<sequence>MRILLSNDDGVHAPGIQTLAKALREFADVQVVAPDRNRSGASNSLTLESSLRTFTFENGDIAVQMGTPTDCVYLGVNALMRPRPDIVVSGINAGPNLGDDVIYSGTVAAAMEGRHLGFPALAVSLDGHKHYDTAAAVTCSILRALCKEPLRTGRILNINVPDLPLDQIKGIRVTRCGTRHPADQVIPQQDPRGNTLYWIGPPGGKCDAGPGTDFAAVDEGYVSITPLHVDLTAHSAQYVVSDWLNSVGVGTQW</sequence>
<proteinExistence type="inferred from homology"/>
<reference key="1">
    <citation type="journal article" date="2009" name="PLoS Genet.">
        <title>Organised genome dynamics in the Escherichia coli species results in highly diverse adaptive paths.</title>
        <authorList>
            <person name="Touchon M."/>
            <person name="Hoede C."/>
            <person name="Tenaillon O."/>
            <person name="Barbe V."/>
            <person name="Baeriswyl S."/>
            <person name="Bidet P."/>
            <person name="Bingen E."/>
            <person name="Bonacorsi S."/>
            <person name="Bouchier C."/>
            <person name="Bouvet O."/>
            <person name="Calteau A."/>
            <person name="Chiapello H."/>
            <person name="Clermont O."/>
            <person name="Cruveiller S."/>
            <person name="Danchin A."/>
            <person name="Diard M."/>
            <person name="Dossat C."/>
            <person name="Karoui M.E."/>
            <person name="Frapy E."/>
            <person name="Garry L."/>
            <person name="Ghigo J.M."/>
            <person name="Gilles A.M."/>
            <person name="Johnson J."/>
            <person name="Le Bouguenec C."/>
            <person name="Lescat M."/>
            <person name="Mangenot S."/>
            <person name="Martinez-Jehanne V."/>
            <person name="Matic I."/>
            <person name="Nassif X."/>
            <person name="Oztas S."/>
            <person name="Petit M.A."/>
            <person name="Pichon C."/>
            <person name="Rouy Z."/>
            <person name="Ruf C.S."/>
            <person name="Schneider D."/>
            <person name="Tourret J."/>
            <person name="Vacherie B."/>
            <person name="Vallenet D."/>
            <person name="Medigue C."/>
            <person name="Rocha E.P.C."/>
            <person name="Denamur E."/>
        </authorList>
    </citation>
    <scope>NUCLEOTIDE SEQUENCE [LARGE SCALE GENOMIC DNA]</scope>
    <source>
        <strain>IAI39 / ExPEC</strain>
    </source>
</reference>
<keyword id="KW-0963">Cytoplasm</keyword>
<keyword id="KW-0378">Hydrolase</keyword>
<keyword id="KW-0479">Metal-binding</keyword>
<keyword id="KW-0547">Nucleotide-binding</keyword>